<accession>P75860</accession>
<proteinExistence type="evidence at transcript level"/>
<protein>
    <recommendedName>
        <fullName>Uncharacterized fimbrial-like protein YcbV</fullName>
    </recommendedName>
</protein>
<reference key="1">
    <citation type="journal article" date="1996" name="DNA Res.">
        <title>A 718-kb DNA sequence of the Escherichia coli K-12 genome corresponding to the 12.7-28.0 min region on the linkage map.</title>
        <authorList>
            <person name="Oshima T."/>
            <person name="Aiba H."/>
            <person name="Baba T."/>
            <person name="Fujita K."/>
            <person name="Hayashi K."/>
            <person name="Honjo A."/>
            <person name="Ikemoto K."/>
            <person name="Inada T."/>
            <person name="Itoh T."/>
            <person name="Kajihara M."/>
            <person name="Kanai K."/>
            <person name="Kashimoto K."/>
            <person name="Kimura S."/>
            <person name="Kitagawa M."/>
            <person name="Makino K."/>
            <person name="Masuda S."/>
            <person name="Miki T."/>
            <person name="Mizobuchi K."/>
            <person name="Mori H."/>
            <person name="Motomura K."/>
            <person name="Nakamura Y."/>
            <person name="Nashimoto H."/>
            <person name="Nishio Y."/>
            <person name="Saito N."/>
            <person name="Sampei G."/>
            <person name="Seki Y."/>
            <person name="Tagami H."/>
            <person name="Takemoto K."/>
            <person name="Wada C."/>
            <person name="Yamamoto Y."/>
            <person name="Yano M."/>
            <person name="Horiuchi T."/>
        </authorList>
    </citation>
    <scope>NUCLEOTIDE SEQUENCE [LARGE SCALE GENOMIC DNA]</scope>
    <source>
        <strain>K12 / W3110 / ATCC 27325 / DSM 5911</strain>
    </source>
</reference>
<reference key="2">
    <citation type="journal article" date="1997" name="Science">
        <title>The complete genome sequence of Escherichia coli K-12.</title>
        <authorList>
            <person name="Blattner F.R."/>
            <person name="Plunkett G. III"/>
            <person name="Bloch C.A."/>
            <person name="Perna N.T."/>
            <person name="Burland V."/>
            <person name="Riley M."/>
            <person name="Collado-Vides J."/>
            <person name="Glasner J.D."/>
            <person name="Rode C.K."/>
            <person name="Mayhew G.F."/>
            <person name="Gregor J."/>
            <person name="Davis N.W."/>
            <person name="Kirkpatrick H.A."/>
            <person name="Goeden M.A."/>
            <person name="Rose D.J."/>
            <person name="Mau B."/>
            <person name="Shao Y."/>
        </authorList>
    </citation>
    <scope>NUCLEOTIDE SEQUENCE [LARGE SCALE GENOMIC DNA]</scope>
    <source>
        <strain>K12 / MG1655 / ATCC 47076</strain>
    </source>
</reference>
<reference key="3">
    <citation type="journal article" date="2006" name="Mol. Syst. Biol.">
        <title>Highly accurate genome sequences of Escherichia coli K-12 strains MG1655 and W3110.</title>
        <authorList>
            <person name="Hayashi K."/>
            <person name="Morooka N."/>
            <person name="Yamamoto Y."/>
            <person name="Fujita K."/>
            <person name="Isono K."/>
            <person name="Choi S."/>
            <person name="Ohtsubo E."/>
            <person name="Baba T."/>
            <person name="Wanner B.L."/>
            <person name="Mori H."/>
            <person name="Horiuchi T."/>
        </authorList>
    </citation>
    <scope>NUCLEOTIDE SEQUENCE [LARGE SCALE GENOMIC DNA]</scope>
    <source>
        <strain>K12 / W3110 / ATCC 27325 / DSM 5911</strain>
    </source>
</reference>
<reference key="4">
    <citation type="journal article" date="2010" name="Environ. Microbiol.">
        <title>Escherichia coli K-12 possesses multiple cryptic but functional chaperone-usher fimbriae with distinct surface specificities.</title>
        <authorList>
            <person name="Korea C.G."/>
            <person name="Badouraly R."/>
            <person name="Prevost M.C."/>
            <person name="Ghigo J.M."/>
            <person name="Beloin C."/>
        </authorList>
    </citation>
    <scope>FUNCTION</scope>
    <scope>INDUCTION</scope>
    <source>
        <strain>K12 / MG1655 / ATCC 47076</strain>
    </source>
</reference>
<evidence type="ECO:0000255" key="1"/>
<evidence type="ECO:0000269" key="2">
    <source>
    </source>
</evidence>
<evidence type="ECO:0000305" key="3">
    <source>
    </source>
</evidence>
<name>YCBV_ECOLI</name>
<comment type="function">
    <text evidence="2">Part of the elfADCG-ycbUVF fimbrial operon, which promotes adhesion of bacteria to different abiotic surfaces.</text>
</comment>
<comment type="induction">
    <text evidence="2">Expression is negatively regulated by H-NS and subjected to cAMP receptor protein (CRP)-mediated catabolite repression.</text>
</comment>
<comment type="miscellaneous">
    <text evidence="3">The operon is cryptic under classical laboratory conditions, but is functional when constitutively expressed.</text>
</comment>
<sequence>MLKRIIWILFLLGLTWGCELFAHDGTVNISGSFRRNTCVLAQDSKQINVQLGDVSLTRFSHGNYGPEKSFIINLQDCGTDVSTVDVTFSGTPDGVQSEMLSIESGTDAASGLAIAILDDAKILIPLNQASKDYSLHSGKVPLTFYAQLRPVNSDVQSGKVNASATFVLHYD</sequence>
<organism>
    <name type="scientific">Escherichia coli (strain K12)</name>
    <dbReference type="NCBI Taxonomy" id="83333"/>
    <lineage>
        <taxon>Bacteria</taxon>
        <taxon>Pseudomonadati</taxon>
        <taxon>Pseudomonadota</taxon>
        <taxon>Gammaproteobacteria</taxon>
        <taxon>Enterobacterales</taxon>
        <taxon>Enterobacteriaceae</taxon>
        <taxon>Escherichia</taxon>
    </lineage>
</organism>
<keyword id="KW-1185">Reference proteome</keyword>
<keyword id="KW-0732">Signal</keyword>
<dbReference type="EMBL" id="U00096">
    <property type="protein sequence ID" value="AAC74029.2"/>
    <property type="molecule type" value="Genomic_DNA"/>
</dbReference>
<dbReference type="EMBL" id="AP009048">
    <property type="protein sequence ID" value="BAA35698.2"/>
    <property type="molecule type" value="Genomic_DNA"/>
</dbReference>
<dbReference type="PIR" id="F64834">
    <property type="entry name" value="F64834"/>
</dbReference>
<dbReference type="RefSeq" id="NP_415463.2">
    <property type="nucleotide sequence ID" value="NC_000913.3"/>
</dbReference>
<dbReference type="RefSeq" id="WP_000919497.1">
    <property type="nucleotide sequence ID" value="NZ_SSZK01000002.1"/>
</dbReference>
<dbReference type="SMR" id="P75860"/>
<dbReference type="BioGRID" id="4259442">
    <property type="interactions" value="14"/>
</dbReference>
<dbReference type="DIP" id="DIP-48182N"/>
<dbReference type="FunCoup" id="P75860">
    <property type="interactions" value="39"/>
</dbReference>
<dbReference type="STRING" id="511145.b0943"/>
<dbReference type="PaxDb" id="511145-b0943"/>
<dbReference type="EnsemblBacteria" id="AAC74029">
    <property type="protein sequence ID" value="AAC74029"/>
    <property type="gene ID" value="b0943"/>
</dbReference>
<dbReference type="GeneID" id="945562"/>
<dbReference type="KEGG" id="ecj:JW5123"/>
<dbReference type="KEGG" id="eco:b0943"/>
<dbReference type="KEGG" id="ecoc:C3026_05780"/>
<dbReference type="PATRIC" id="fig|511145.12.peg.977"/>
<dbReference type="EchoBASE" id="EB3478"/>
<dbReference type="eggNOG" id="COG3539">
    <property type="taxonomic scope" value="Bacteria"/>
</dbReference>
<dbReference type="HOGENOM" id="CLU_088965_0_2_6"/>
<dbReference type="InParanoid" id="P75860"/>
<dbReference type="OMA" id="ACDINGQ"/>
<dbReference type="OrthoDB" id="6896277at2"/>
<dbReference type="PhylomeDB" id="P75860"/>
<dbReference type="BioCyc" id="EcoCyc:G6485-MONOMER"/>
<dbReference type="PRO" id="PR:P75860"/>
<dbReference type="Proteomes" id="UP000000625">
    <property type="component" value="Chromosome"/>
</dbReference>
<dbReference type="GO" id="GO:0009289">
    <property type="term" value="C:pilus"/>
    <property type="evidence" value="ECO:0000318"/>
    <property type="project" value="GO_Central"/>
</dbReference>
<dbReference type="GO" id="GO:0043709">
    <property type="term" value="P:cell adhesion involved in single-species biofilm formation"/>
    <property type="evidence" value="ECO:0000315"/>
    <property type="project" value="EcoCyc"/>
</dbReference>
<dbReference type="FunFam" id="2.60.40.1090:FF:000011">
    <property type="entry name" value="Fimbrial-like adhesin protein"/>
    <property type="match status" value="1"/>
</dbReference>
<dbReference type="Gene3D" id="2.60.40.1090">
    <property type="entry name" value="Fimbrial-type adhesion domain"/>
    <property type="match status" value="1"/>
</dbReference>
<dbReference type="InterPro" id="IPR000259">
    <property type="entry name" value="Adhesion_dom_fimbrial"/>
</dbReference>
<dbReference type="InterPro" id="IPR036937">
    <property type="entry name" value="Adhesion_dom_fimbrial_sf"/>
</dbReference>
<dbReference type="InterPro" id="IPR008966">
    <property type="entry name" value="Adhesion_dom_sf"/>
</dbReference>
<dbReference type="InterPro" id="IPR050263">
    <property type="entry name" value="Bact_Fimbrial_Adh_Pro"/>
</dbReference>
<dbReference type="PANTHER" id="PTHR33420">
    <property type="entry name" value="FIMBRIAL SUBUNIT ELFA-RELATED"/>
    <property type="match status" value="1"/>
</dbReference>
<dbReference type="PANTHER" id="PTHR33420:SF25">
    <property type="entry name" value="PROTEIN FIMF"/>
    <property type="match status" value="1"/>
</dbReference>
<dbReference type="Pfam" id="PF00419">
    <property type="entry name" value="Fimbrial"/>
    <property type="match status" value="1"/>
</dbReference>
<dbReference type="SUPFAM" id="SSF49401">
    <property type="entry name" value="Bacterial adhesins"/>
    <property type="match status" value="1"/>
</dbReference>
<gene>
    <name type="primary">ycbV</name>
    <name type="ordered locus">b0943</name>
    <name type="ordered locus">JW5123</name>
</gene>
<feature type="signal peptide" evidence="1">
    <location>
        <begin position="1"/>
        <end position="17"/>
    </location>
</feature>
<feature type="chain" id="PRO_0000013766" description="Uncharacterized fimbrial-like protein YcbV">
    <location>
        <begin position="18"/>
        <end position="171"/>
    </location>
</feature>